<reference key="1">
    <citation type="journal article" date="2003" name="Mol. Microbiol.">
        <title>An integrated analysis of the genome of the hyperthermophilic archaeon Pyrococcus abyssi.</title>
        <authorList>
            <person name="Cohen G.N."/>
            <person name="Barbe V."/>
            <person name="Flament D."/>
            <person name="Galperin M."/>
            <person name="Heilig R."/>
            <person name="Lecompte O."/>
            <person name="Poch O."/>
            <person name="Prieur D."/>
            <person name="Querellou J."/>
            <person name="Ripp R."/>
            <person name="Thierry J.-C."/>
            <person name="Van der Oost J."/>
            <person name="Weissenbach J."/>
            <person name="Zivanovic Y."/>
            <person name="Forterre P."/>
        </authorList>
    </citation>
    <scope>NUCLEOTIDE SEQUENCE [LARGE SCALE GENOMIC DNA]</scope>
    <source>
        <strain>GE5 / Orsay</strain>
    </source>
</reference>
<reference key="2">
    <citation type="journal article" date="2012" name="Curr. Microbiol.">
        <title>Re-annotation of two hyperthermophilic archaea Pyrococcus abyssi GE5 and Pyrococcus furiosus DSM 3638.</title>
        <authorList>
            <person name="Gao J."/>
            <person name="Wang J."/>
        </authorList>
    </citation>
    <scope>GENOME REANNOTATION</scope>
    <source>
        <strain>GE5 / Orsay</strain>
    </source>
</reference>
<proteinExistence type="inferred from homology"/>
<comment type="function">
    <text evidence="2">Deglycase that catalyzes the deglycation of the Maillard adducts formed between amino groups of proteins and reactive carbonyl groups of glyoxals. Thus, functions as a protein deglycase that repairs methylglyoxal- and glyoxal-glycated proteins, and releases repaired proteins and lactate or glycolate, respectively. Deglycates cysteine, arginine and lysine residues in proteins, and thus reactivates these proteins by reversing glycation by glyoxals. Acts on early glycation intermediates (hemithioacetals and aminocarbinols), preventing the formation of advanced glycation endproducts (AGE) that cause irreversible damage. Also displays proteolytic activity.</text>
</comment>
<comment type="catalytic activity">
    <reaction evidence="2">
        <text>N(omega)-(1-hydroxy-2-oxopropyl)-L-arginyl-[protein] + H2O = lactate + L-arginyl-[protein] + H(+)</text>
        <dbReference type="Rhea" id="RHEA:49548"/>
        <dbReference type="Rhea" id="RHEA-COMP:10532"/>
        <dbReference type="Rhea" id="RHEA-COMP:12428"/>
        <dbReference type="ChEBI" id="CHEBI:15377"/>
        <dbReference type="ChEBI" id="CHEBI:15378"/>
        <dbReference type="ChEBI" id="CHEBI:24996"/>
        <dbReference type="ChEBI" id="CHEBI:29965"/>
        <dbReference type="ChEBI" id="CHEBI:131708"/>
        <dbReference type="EC" id="3.5.1.124"/>
    </reaction>
</comment>
<comment type="catalytic activity">
    <reaction evidence="2">
        <text>N(6)-(1-hydroxy-2-oxopropyl)-L-lysyl-[protein] + H2O = lactate + L-lysyl-[protein] + H(+)</text>
        <dbReference type="Rhea" id="RHEA:49552"/>
        <dbReference type="Rhea" id="RHEA-COMP:9752"/>
        <dbReference type="Rhea" id="RHEA-COMP:12429"/>
        <dbReference type="ChEBI" id="CHEBI:15377"/>
        <dbReference type="ChEBI" id="CHEBI:15378"/>
        <dbReference type="ChEBI" id="CHEBI:24996"/>
        <dbReference type="ChEBI" id="CHEBI:29969"/>
        <dbReference type="ChEBI" id="CHEBI:131709"/>
        <dbReference type="EC" id="3.5.1.124"/>
    </reaction>
</comment>
<comment type="catalytic activity">
    <reaction evidence="2">
        <text>S-(1-hydroxy-2-oxopropyl)-L-cysteinyl-[protein] + H2O = lactate + L-cysteinyl-[protein] + H(+)</text>
        <dbReference type="Rhea" id="RHEA:49556"/>
        <dbReference type="Rhea" id="RHEA-COMP:10131"/>
        <dbReference type="Rhea" id="RHEA-COMP:12430"/>
        <dbReference type="ChEBI" id="CHEBI:15377"/>
        <dbReference type="ChEBI" id="CHEBI:15378"/>
        <dbReference type="ChEBI" id="CHEBI:24996"/>
        <dbReference type="ChEBI" id="CHEBI:29950"/>
        <dbReference type="ChEBI" id="CHEBI:131710"/>
        <dbReference type="EC" id="3.5.1.124"/>
    </reaction>
</comment>
<comment type="catalytic activity">
    <reaction evidence="2">
        <text>N(omega)-(1-hydroxy-2-oxoethyl)-L-arginyl-[protein] + H2O = L-arginyl-[protein] + glycolate + H(+)</text>
        <dbReference type="Rhea" id="RHEA:57188"/>
        <dbReference type="Rhea" id="RHEA-COMP:10532"/>
        <dbReference type="Rhea" id="RHEA-COMP:14844"/>
        <dbReference type="ChEBI" id="CHEBI:15377"/>
        <dbReference type="ChEBI" id="CHEBI:15378"/>
        <dbReference type="ChEBI" id="CHEBI:29805"/>
        <dbReference type="ChEBI" id="CHEBI:29965"/>
        <dbReference type="ChEBI" id="CHEBI:141553"/>
        <dbReference type="EC" id="3.5.1.124"/>
    </reaction>
</comment>
<comment type="catalytic activity">
    <reaction evidence="2">
        <text>N(6)-(1-hydroxy-2-oxoethyl)-L-lysyl-[protein] + H2O = glycolate + L-lysyl-[protein] + H(+)</text>
        <dbReference type="Rhea" id="RHEA:57192"/>
        <dbReference type="Rhea" id="RHEA-COMP:9752"/>
        <dbReference type="Rhea" id="RHEA-COMP:14845"/>
        <dbReference type="ChEBI" id="CHEBI:15377"/>
        <dbReference type="ChEBI" id="CHEBI:15378"/>
        <dbReference type="ChEBI" id="CHEBI:29805"/>
        <dbReference type="ChEBI" id="CHEBI:29969"/>
        <dbReference type="ChEBI" id="CHEBI:141554"/>
        <dbReference type="EC" id="3.5.1.124"/>
    </reaction>
</comment>
<comment type="catalytic activity">
    <reaction evidence="2">
        <text>S-(1-hydroxy-2-oxoethyl)-L-cysteinyl-[protein] + H2O = glycolate + L-cysteinyl-[protein] + H(+)</text>
        <dbReference type="Rhea" id="RHEA:57196"/>
        <dbReference type="Rhea" id="RHEA-COMP:10131"/>
        <dbReference type="Rhea" id="RHEA-COMP:14846"/>
        <dbReference type="ChEBI" id="CHEBI:15377"/>
        <dbReference type="ChEBI" id="CHEBI:15378"/>
        <dbReference type="ChEBI" id="CHEBI:29805"/>
        <dbReference type="ChEBI" id="CHEBI:29950"/>
        <dbReference type="ChEBI" id="CHEBI:141555"/>
        <dbReference type="EC" id="3.5.1.124"/>
    </reaction>
</comment>
<comment type="subunit">
    <text evidence="1">Homohexamer formed by a dimer of trimers that assemble into a hollow ring structure.</text>
</comment>
<comment type="subcellular location">
    <subcellularLocation>
        <location evidence="2">Cytoplasm</location>
    </subcellularLocation>
</comment>
<comment type="similarity">
    <text evidence="4">Belongs to the peptidase C56 family.</text>
</comment>
<name>DEGLY_PYRAB</name>
<dbReference type="EC" id="3.5.1.124" evidence="2"/>
<dbReference type="EC" id="3.4.22.-" evidence="2"/>
<dbReference type="EMBL" id="AJ248284">
    <property type="protein sequence ID" value="CAB49391.1"/>
    <property type="molecule type" value="Genomic_DNA"/>
</dbReference>
<dbReference type="EMBL" id="HE613800">
    <property type="protein sequence ID" value="CCE69852.1"/>
    <property type="molecule type" value="Genomic_DNA"/>
</dbReference>
<dbReference type="PIR" id="H75163">
    <property type="entry name" value="H75163"/>
</dbReference>
<dbReference type="RefSeq" id="WP_010867593.1">
    <property type="nucleotide sequence ID" value="NC_000868.1"/>
</dbReference>
<dbReference type="SMR" id="Q9V1F8"/>
<dbReference type="STRING" id="272844.PAB0311"/>
<dbReference type="MEROPS" id="C56.001"/>
<dbReference type="KEGG" id="pab:PAB0311"/>
<dbReference type="PATRIC" id="fig|272844.11.peg.496"/>
<dbReference type="eggNOG" id="arCOG00769">
    <property type="taxonomic scope" value="Archaea"/>
</dbReference>
<dbReference type="HOGENOM" id="CLU_000445_44_4_2"/>
<dbReference type="OrthoDB" id="82036at2157"/>
<dbReference type="PhylomeDB" id="Q9V1F8"/>
<dbReference type="Proteomes" id="UP000000810">
    <property type="component" value="Chromosome"/>
</dbReference>
<dbReference type="Proteomes" id="UP000009139">
    <property type="component" value="Chromosome"/>
</dbReference>
<dbReference type="GO" id="GO:0005737">
    <property type="term" value="C:cytoplasm"/>
    <property type="evidence" value="ECO:0007669"/>
    <property type="project" value="UniProtKB-SubCell"/>
</dbReference>
<dbReference type="GO" id="GO:0008233">
    <property type="term" value="F:peptidase activity"/>
    <property type="evidence" value="ECO:0007669"/>
    <property type="project" value="UniProtKB-KW"/>
</dbReference>
<dbReference type="GO" id="GO:0036524">
    <property type="term" value="F:protein deglycase activity"/>
    <property type="evidence" value="ECO:0007669"/>
    <property type="project" value="UniProtKB-EC"/>
</dbReference>
<dbReference type="GO" id="GO:0006508">
    <property type="term" value="P:proteolysis"/>
    <property type="evidence" value="ECO:0007669"/>
    <property type="project" value="UniProtKB-KW"/>
</dbReference>
<dbReference type="CDD" id="cd03134">
    <property type="entry name" value="GATase1_PfpI_like"/>
    <property type="match status" value="1"/>
</dbReference>
<dbReference type="Gene3D" id="3.40.50.880">
    <property type="match status" value="1"/>
</dbReference>
<dbReference type="InterPro" id="IPR006286">
    <property type="entry name" value="C56_PfpI-like"/>
</dbReference>
<dbReference type="InterPro" id="IPR029062">
    <property type="entry name" value="Class_I_gatase-like"/>
</dbReference>
<dbReference type="InterPro" id="IPR002818">
    <property type="entry name" value="DJ-1/PfpI"/>
</dbReference>
<dbReference type="InterPro" id="IPR053435">
    <property type="entry name" value="Peptidase_C56_Deglycase"/>
</dbReference>
<dbReference type="NCBIfam" id="NF040823">
    <property type="entry name" value="deglyc_PfpI"/>
    <property type="match status" value="1"/>
</dbReference>
<dbReference type="NCBIfam" id="TIGR01382">
    <property type="entry name" value="PfpI"/>
    <property type="match status" value="1"/>
</dbReference>
<dbReference type="PANTHER" id="PTHR42733">
    <property type="entry name" value="DJ-1 PROTEIN"/>
    <property type="match status" value="1"/>
</dbReference>
<dbReference type="PANTHER" id="PTHR42733:SF2">
    <property type="entry name" value="DJ-1_THIJ_PFPI FAMILY PROTEIN"/>
    <property type="match status" value="1"/>
</dbReference>
<dbReference type="Pfam" id="PF01965">
    <property type="entry name" value="DJ-1_PfpI"/>
    <property type="match status" value="1"/>
</dbReference>
<dbReference type="SUPFAM" id="SSF52317">
    <property type="entry name" value="Class I glutamine amidotransferase-like"/>
    <property type="match status" value="1"/>
</dbReference>
<dbReference type="PROSITE" id="PS51276">
    <property type="entry name" value="PEPTIDASE_C56_PFPI"/>
    <property type="match status" value="1"/>
</dbReference>
<gene>
    <name type="ordered locus">PYRAB04690</name>
    <name type="ORF">PAB0311</name>
</gene>
<sequence>MRVLILSADQFEDVELIYPYHRLKEEGHEVLVASFKRGVITGKHGYTVNVDLAFEEVNPDEFDALVLPGGRAPERVRLNEKAVEIAKKMFSEGKPVASICHGPQILISAGVLRGRRGTSYPGIKDDMINAGVDWVDAEVVVDGNWVSSRVPGDLYAWMREFVKLLK</sequence>
<keyword id="KW-0963">Cytoplasm</keyword>
<keyword id="KW-0378">Hydrolase</keyword>
<keyword id="KW-0645">Protease</keyword>
<protein>
    <recommendedName>
        <fullName evidence="2">Deglycase PYRAB04690</fullName>
        <ecNumber evidence="2">3.5.1.124</ecNumber>
    </recommendedName>
    <alternativeName>
        <fullName evidence="2">Intracellular protease PYRAB04690</fullName>
        <ecNumber evidence="2">3.4.22.-</ecNumber>
    </alternativeName>
</protein>
<evidence type="ECO:0000250" key="1">
    <source>
        <dbReference type="UniProtKB" id="O59413"/>
    </source>
</evidence>
<evidence type="ECO:0000250" key="2">
    <source>
        <dbReference type="UniProtKB" id="Q51732"/>
    </source>
</evidence>
<evidence type="ECO:0000255" key="3">
    <source>
        <dbReference type="PROSITE-ProRule" id="PRU00608"/>
    </source>
</evidence>
<evidence type="ECO:0000305" key="4"/>
<organism>
    <name type="scientific">Pyrococcus abyssi (strain GE5 / Orsay)</name>
    <dbReference type="NCBI Taxonomy" id="272844"/>
    <lineage>
        <taxon>Archaea</taxon>
        <taxon>Methanobacteriati</taxon>
        <taxon>Methanobacteriota</taxon>
        <taxon>Thermococci</taxon>
        <taxon>Thermococcales</taxon>
        <taxon>Thermococcaceae</taxon>
        <taxon>Pyrococcus</taxon>
    </lineage>
</organism>
<feature type="chain" id="PRO_0000157825" description="Deglycase PYRAB04690">
    <location>
        <begin position="1"/>
        <end position="166"/>
    </location>
</feature>
<feature type="domain" description="PfpI endopeptidase" evidence="3">
    <location>
        <begin position="1"/>
        <end position="166"/>
    </location>
</feature>
<feature type="active site" evidence="3">
    <location>
        <position position="101"/>
    </location>
</feature>
<accession>Q9V1F8</accession>
<accession>G8ZGH3</accession>